<comment type="function">
    <text evidence="4">Probable maltose transporter. Essential for the conversion of starch to sucrose in leaves at night, probably via the export of maltose from the chloroplast. Required for root cap cells formation.</text>
</comment>
<comment type="subcellular location">
    <subcellularLocation>
        <location evidence="4">Plastid</location>
        <location evidence="4">Chloroplast inner membrane</location>
        <topology evidence="4">Multi-pass membrane protein</topology>
    </subcellularLocation>
</comment>
<comment type="tissue specificity">
    <text evidence="3 4">Expressed in leaves and roots. Expressed in root cap cells.</text>
</comment>
<comment type="sequence caution" evidence="5">
    <conflict type="erroneous gene model prediction">
        <sequence resource="EMBL-CDS" id="CAC01896"/>
    </conflict>
</comment>
<gene>
    <name type="primary">MEX1</name>
    <name type="synonym">RCP1</name>
    <name type="ordered locus">At5g17520</name>
    <name type="ORF">K3M16.90</name>
</gene>
<accession>Q9LF50</accession>
<accession>Q9SPJ2</accession>
<accession>Q9SPJ3</accession>
<reference key="1">
    <citation type="journal article" date="1999" name="Proc. Natl. Acad. Sci. U.S.A.">
        <title>Genetic ablation of root cap cells in Arabidopsis.</title>
        <authorList>
            <person name="Tsugeki R."/>
            <person name="Fedoroff N.V."/>
        </authorList>
    </citation>
    <scope>NUCLEOTIDE SEQUENCE [GENOMIC DNA / MRNA]</scope>
    <scope>TISSUE SPECIFICITY</scope>
    <source>
        <strain>cv. Columbia</strain>
        <strain>cv. No-0</strain>
    </source>
</reference>
<reference key="2">
    <citation type="journal article" date="2000" name="Nature">
        <title>Sequence and analysis of chromosome 5 of the plant Arabidopsis thaliana.</title>
        <authorList>
            <person name="Tabata S."/>
            <person name="Kaneko T."/>
            <person name="Nakamura Y."/>
            <person name="Kotani H."/>
            <person name="Kato T."/>
            <person name="Asamizu E."/>
            <person name="Miyajima N."/>
            <person name="Sasamoto S."/>
            <person name="Kimura T."/>
            <person name="Hosouchi T."/>
            <person name="Kawashima K."/>
            <person name="Kohara M."/>
            <person name="Matsumoto M."/>
            <person name="Matsuno A."/>
            <person name="Muraki A."/>
            <person name="Nakayama S."/>
            <person name="Nakazaki N."/>
            <person name="Naruo K."/>
            <person name="Okumura S."/>
            <person name="Shinpo S."/>
            <person name="Takeuchi C."/>
            <person name="Wada T."/>
            <person name="Watanabe A."/>
            <person name="Yamada M."/>
            <person name="Yasuda M."/>
            <person name="Sato S."/>
            <person name="de la Bastide M."/>
            <person name="Huang E."/>
            <person name="Spiegel L."/>
            <person name="Gnoj L."/>
            <person name="O'Shaughnessy A."/>
            <person name="Preston R."/>
            <person name="Habermann K."/>
            <person name="Murray J."/>
            <person name="Johnson D."/>
            <person name="Rohlfing T."/>
            <person name="Nelson J."/>
            <person name="Stoneking T."/>
            <person name="Pepin K."/>
            <person name="Spieth J."/>
            <person name="Sekhon M."/>
            <person name="Armstrong J."/>
            <person name="Becker M."/>
            <person name="Belter E."/>
            <person name="Cordum H."/>
            <person name="Cordes M."/>
            <person name="Courtney L."/>
            <person name="Courtney W."/>
            <person name="Dante M."/>
            <person name="Du H."/>
            <person name="Edwards J."/>
            <person name="Fryman J."/>
            <person name="Haakensen B."/>
            <person name="Lamar E."/>
            <person name="Latreille P."/>
            <person name="Leonard S."/>
            <person name="Meyer R."/>
            <person name="Mulvaney E."/>
            <person name="Ozersky P."/>
            <person name="Riley A."/>
            <person name="Strowmatt C."/>
            <person name="Wagner-McPherson C."/>
            <person name="Wollam A."/>
            <person name="Yoakum M."/>
            <person name="Bell M."/>
            <person name="Dedhia N."/>
            <person name="Parnell L."/>
            <person name="Shah R."/>
            <person name="Rodriguez M."/>
            <person name="Hoon See L."/>
            <person name="Vil D."/>
            <person name="Baker J."/>
            <person name="Kirchoff K."/>
            <person name="Toth K."/>
            <person name="King L."/>
            <person name="Bahret A."/>
            <person name="Miller B."/>
            <person name="Marra M.A."/>
            <person name="Martienssen R."/>
            <person name="McCombie W.R."/>
            <person name="Wilson R.K."/>
            <person name="Murphy G."/>
            <person name="Bancroft I."/>
            <person name="Volckaert G."/>
            <person name="Wambutt R."/>
            <person name="Duesterhoeft A."/>
            <person name="Stiekema W."/>
            <person name="Pohl T."/>
            <person name="Entian K.-D."/>
            <person name="Terryn N."/>
            <person name="Hartley N."/>
            <person name="Bent E."/>
            <person name="Johnson S."/>
            <person name="Langham S.-A."/>
            <person name="McCullagh B."/>
            <person name="Robben J."/>
            <person name="Grymonprez B."/>
            <person name="Zimmermann W."/>
            <person name="Ramsperger U."/>
            <person name="Wedler H."/>
            <person name="Balke K."/>
            <person name="Wedler E."/>
            <person name="Peters S."/>
            <person name="van Staveren M."/>
            <person name="Dirkse W."/>
            <person name="Mooijman P."/>
            <person name="Klein Lankhorst R."/>
            <person name="Weitzenegger T."/>
            <person name="Bothe G."/>
            <person name="Rose M."/>
            <person name="Hauf J."/>
            <person name="Berneiser S."/>
            <person name="Hempel S."/>
            <person name="Feldpausch M."/>
            <person name="Lamberth S."/>
            <person name="Villarroel R."/>
            <person name="Gielen J."/>
            <person name="Ardiles W."/>
            <person name="Bents O."/>
            <person name="Lemcke K."/>
            <person name="Kolesov G."/>
            <person name="Mayer K.F.X."/>
            <person name="Rudd S."/>
            <person name="Schoof H."/>
            <person name="Schueller C."/>
            <person name="Zaccaria P."/>
            <person name="Mewes H.-W."/>
            <person name="Bevan M."/>
            <person name="Fransz P.F."/>
        </authorList>
    </citation>
    <scope>NUCLEOTIDE SEQUENCE [LARGE SCALE GENOMIC DNA]</scope>
    <source>
        <strain>cv. Columbia</strain>
    </source>
</reference>
<reference key="3">
    <citation type="journal article" date="2017" name="Plant J.">
        <title>Araport11: a complete reannotation of the Arabidopsis thaliana reference genome.</title>
        <authorList>
            <person name="Cheng C.Y."/>
            <person name="Krishnakumar V."/>
            <person name="Chan A.P."/>
            <person name="Thibaud-Nissen F."/>
            <person name="Schobel S."/>
            <person name="Town C.D."/>
        </authorList>
    </citation>
    <scope>GENOME REANNOTATION</scope>
    <source>
        <strain>cv. Columbia</strain>
    </source>
</reference>
<reference key="4">
    <citation type="journal article" date="2003" name="Science">
        <title>Empirical analysis of transcriptional activity in the Arabidopsis genome.</title>
        <authorList>
            <person name="Yamada K."/>
            <person name="Lim J."/>
            <person name="Dale J.M."/>
            <person name="Chen H."/>
            <person name="Shinn P."/>
            <person name="Palm C.J."/>
            <person name="Southwick A.M."/>
            <person name="Wu H.C."/>
            <person name="Kim C.J."/>
            <person name="Nguyen M."/>
            <person name="Pham P.K."/>
            <person name="Cheuk R.F."/>
            <person name="Karlin-Newmann G."/>
            <person name="Liu S.X."/>
            <person name="Lam B."/>
            <person name="Sakano H."/>
            <person name="Wu T."/>
            <person name="Yu G."/>
            <person name="Miranda M."/>
            <person name="Quach H.L."/>
            <person name="Tripp M."/>
            <person name="Chang C.H."/>
            <person name="Lee J.M."/>
            <person name="Toriumi M.J."/>
            <person name="Chan M.M."/>
            <person name="Tang C.C."/>
            <person name="Onodera C.S."/>
            <person name="Deng J.M."/>
            <person name="Akiyama K."/>
            <person name="Ansari Y."/>
            <person name="Arakawa T."/>
            <person name="Banh J."/>
            <person name="Banno F."/>
            <person name="Bowser L."/>
            <person name="Brooks S.Y."/>
            <person name="Carninci P."/>
            <person name="Chao Q."/>
            <person name="Choy N."/>
            <person name="Enju A."/>
            <person name="Goldsmith A.D."/>
            <person name="Gurjal M."/>
            <person name="Hansen N.F."/>
            <person name="Hayashizaki Y."/>
            <person name="Johnson-Hopson C."/>
            <person name="Hsuan V.W."/>
            <person name="Iida K."/>
            <person name="Karnes M."/>
            <person name="Khan S."/>
            <person name="Koesema E."/>
            <person name="Ishida J."/>
            <person name="Jiang P.X."/>
            <person name="Jones T."/>
            <person name="Kawai J."/>
            <person name="Kamiya A."/>
            <person name="Meyers C."/>
            <person name="Nakajima M."/>
            <person name="Narusaka M."/>
            <person name="Seki M."/>
            <person name="Sakurai T."/>
            <person name="Satou M."/>
            <person name="Tamse R."/>
            <person name="Vaysberg M."/>
            <person name="Wallender E.K."/>
            <person name="Wong C."/>
            <person name="Yamamura Y."/>
            <person name="Yuan S."/>
            <person name="Shinozaki K."/>
            <person name="Davis R.W."/>
            <person name="Theologis A."/>
            <person name="Ecker J.R."/>
        </authorList>
    </citation>
    <scope>NUCLEOTIDE SEQUENCE [LARGE SCALE MRNA]</scope>
    <source>
        <strain>cv. Columbia</strain>
    </source>
</reference>
<reference key="5">
    <citation type="submission" date="2002-03" db="EMBL/GenBank/DDBJ databases">
        <title>Full-length cDNA from Arabidopsis thaliana.</title>
        <authorList>
            <person name="Brover V.V."/>
            <person name="Troukhan M.E."/>
            <person name="Alexandrov N.A."/>
            <person name="Lu Y.-P."/>
            <person name="Flavell R.B."/>
            <person name="Feldmann K.A."/>
        </authorList>
    </citation>
    <scope>NUCLEOTIDE SEQUENCE [LARGE SCALE MRNA]</scope>
</reference>
<reference key="6">
    <citation type="journal article" date="2004" name="Science">
        <title>A previously unknown maltose transporter essential for starch degradation in leaves.</title>
        <authorList>
            <person name="Niittylae T."/>
            <person name="Messerli G."/>
            <person name="Trevisan M."/>
            <person name="Chen J."/>
            <person name="Smith A.M."/>
            <person name="Zeeman S.C."/>
        </authorList>
    </citation>
    <scope>FUNCTION</scope>
    <scope>SUBCELLULAR LOCATION</scope>
    <scope>TISSUE SPECIFICITY</scope>
    <source>
        <strain>cv. Columbia</strain>
    </source>
</reference>
<evidence type="ECO:0000255" key="1"/>
<evidence type="ECO:0000256" key="2">
    <source>
        <dbReference type="SAM" id="MobiDB-lite"/>
    </source>
</evidence>
<evidence type="ECO:0000269" key="3">
    <source>
    </source>
</evidence>
<evidence type="ECO:0000269" key="4">
    <source>
    </source>
</evidence>
<evidence type="ECO:0000305" key="5"/>
<proteinExistence type="evidence at transcript level"/>
<protein>
    <recommendedName>
        <fullName>Maltose excess protein 1, chloroplastic</fullName>
    </recommendedName>
    <alternativeName>
        <fullName>Root cap protein 1</fullName>
    </alternativeName>
</protein>
<organism>
    <name type="scientific">Arabidopsis thaliana</name>
    <name type="common">Mouse-ear cress</name>
    <dbReference type="NCBI Taxonomy" id="3702"/>
    <lineage>
        <taxon>Eukaryota</taxon>
        <taxon>Viridiplantae</taxon>
        <taxon>Streptophyta</taxon>
        <taxon>Embryophyta</taxon>
        <taxon>Tracheophyta</taxon>
        <taxon>Spermatophyta</taxon>
        <taxon>Magnoliopsida</taxon>
        <taxon>eudicotyledons</taxon>
        <taxon>Gunneridae</taxon>
        <taxon>Pentapetalae</taxon>
        <taxon>rosids</taxon>
        <taxon>malvids</taxon>
        <taxon>Brassicales</taxon>
        <taxon>Brassicaceae</taxon>
        <taxon>Camelineae</taxon>
        <taxon>Arabidopsis</taxon>
    </lineage>
</organism>
<dbReference type="EMBL" id="AF168390">
    <property type="protein sequence ID" value="AAF04350.1"/>
    <property type="molecule type" value="mRNA"/>
</dbReference>
<dbReference type="EMBL" id="AF168391">
    <property type="protein sequence ID" value="AAF04351.1"/>
    <property type="molecule type" value="Genomic_DNA"/>
</dbReference>
<dbReference type="EMBL" id="AL391150">
    <property type="protein sequence ID" value="CAC01896.1"/>
    <property type="status" value="ALT_SEQ"/>
    <property type="molecule type" value="Genomic_DNA"/>
</dbReference>
<dbReference type="EMBL" id="CP002688">
    <property type="protein sequence ID" value="AED92436.1"/>
    <property type="molecule type" value="Genomic_DNA"/>
</dbReference>
<dbReference type="EMBL" id="AY056187">
    <property type="protein sequence ID" value="AAL07036.1"/>
    <property type="molecule type" value="mRNA"/>
</dbReference>
<dbReference type="EMBL" id="AY096715">
    <property type="protein sequence ID" value="AAM20349.1"/>
    <property type="molecule type" value="mRNA"/>
</dbReference>
<dbReference type="EMBL" id="AY084279">
    <property type="protein sequence ID" value="AAM60870.1"/>
    <property type="molecule type" value="mRNA"/>
</dbReference>
<dbReference type="PIR" id="T51478">
    <property type="entry name" value="T51478"/>
</dbReference>
<dbReference type="RefSeq" id="NP_568349.1">
    <property type="nucleotide sequence ID" value="NM_121758.4"/>
</dbReference>
<dbReference type="FunCoup" id="Q9LF50">
    <property type="interactions" value="1059"/>
</dbReference>
<dbReference type="STRING" id="3702.Q9LF50"/>
<dbReference type="TCDB" id="2.A.84.1.1">
    <property type="family name" value="the chloroplast maltose exporter (mex) family"/>
</dbReference>
<dbReference type="iPTMnet" id="Q9LF50"/>
<dbReference type="PaxDb" id="3702-AT5G17520.1"/>
<dbReference type="EnsemblPlants" id="AT5G17520.1">
    <property type="protein sequence ID" value="AT5G17520.1"/>
    <property type="gene ID" value="AT5G17520"/>
</dbReference>
<dbReference type="GeneID" id="831618"/>
<dbReference type="Gramene" id="AT5G17520.1">
    <property type="protein sequence ID" value="AT5G17520.1"/>
    <property type="gene ID" value="AT5G17520"/>
</dbReference>
<dbReference type="KEGG" id="ath:AT5G17520"/>
<dbReference type="Araport" id="AT5G17520"/>
<dbReference type="TAIR" id="AT5G17520">
    <property type="gene designation" value="RCP1"/>
</dbReference>
<dbReference type="eggNOG" id="ENOG502QTKC">
    <property type="taxonomic scope" value="Eukaryota"/>
</dbReference>
<dbReference type="HOGENOM" id="CLU_049521_0_0_1"/>
<dbReference type="InParanoid" id="Q9LF50"/>
<dbReference type="PhylomeDB" id="Q9LF50"/>
<dbReference type="BioCyc" id="ARA:AT5G17520-MONOMER"/>
<dbReference type="BioCyc" id="MetaCyc:AT5G17520-MONOMER"/>
<dbReference type="PRO" id="PR:Q9LF50"/>
<dbReference type="Proteomes" id="UP000006548">
    <property type="component" value="Chromosome 5"/>
</dbReference>
<dbReference type="ExpressionAtlas" id="Q9LF50">
    <property type="expression patterns" value="baseline and differential"/>
</dbReference>
<dbReference type="GO" id="GO:0009941">
    <property type="term" value="C:chloroplast envelope"/>
    <property type="evidence" value="ECO:0000314"/>
    <property type="project" value="TAIR"/>
</dbReference>
<dbReference type="GO" id="GO:0009706">
    <property type="term" value="C:chloroplast inner membrane"/>
    <property type="evidence" value="ECO:0007005"/>
    <property type="project" value="TAIR"/>
</dbReference>
<dbReference type="GO" id="GO:0009536">
    <property type="term" value="C:plastid"/>
    <property type="evidence" value="ECO:0007005"/>
    <property type="project" value="TAIR"/>
</dbReference>
<dbReference type="GO" id="GO:0005363">
    <property type="term" value="F:maltose transmembrane transporter activity"/>
    <property type="evidence" value="ECO:0000314"/>
    <property type="project" value="TAIR"/>
</dbReference>
<dbReference type="GO" id="GO:0005975">
    <property type="term" value="P:carbohydrate metabolic process"/>
    <property type="evidence" value="ECO:0000315"/>
    <property type="project" value="TAIR"/>
</dbReference>
<dbReference type="GO" id="GO:0000023">
    <property type="term" value="P:maltose metabolic process"/>
    <property type="evidence" value="ECO:0000315"/>
    <property type="project" value="TAIR"/>
</dbReference>
<dbReference type="GO" id="GO:0009624">
    <property type="term" value="P:response to nematode"/>
    <property type="evidence" value="ECO:0000270"/>
    <property type="project" value="TAIR"/>
</dbReference>
<dbReference type="GO" id="GO:0005983">
    <property type="term" value="P:starch catabolic process"/>
    <property type="evidence" value="ECO:0000315"/>
    <property type="project" value="TAIR"/>
</dbReference>
<dbReference type="InterPro" id="IPR034628">
    <property type="entry name" value="MEX1/MEX1-like"/>
</dbReference>
<dbReference type="PANTHER" id="PTHR34809">
    <property type="entry name" value="MALTOSE EXCESS PROTEIN 1, CHLOROPLASTIC-RELATED"/>
    <property type="match status" value="1"/>
</dbReference>
<dbReference type="PANTHER" id="PTHR34809:SF1">
    <property type="entry name" value="MALTOSE EXCESS PROTEIN 1, CHLOROPLASTIC-RELATED"/>
    <property type="match status" value="1"/>
</dbReference>
<name>MEX1_ARATH</name>
<keyword id="KW-0150">Chloroplast</keyword>
<keyword id="KW-0462">Maltose metabolism</keyword>
<keyword id="KW-0472">Membrane</keyword>
<keyword id="KW-0934">Plastid</keyword>
<keyword id="KW-1001">Plastid inner membrane</keyword>
<keyword id="KW-1185">Reference proteome</keyword>
<keyword id="KW-0809">Transit peptide</keyword>
<keyword id="KW-0812">Transmembrane</keyword>
<keyword id="KW-1133">Transmembrane helix</keyword>
<keyword id="KW-0813">Transport</keyword>
<feature type="transit peptide" description="Chloroplast" evidence="1">
    <location>
        <begin position="1"/>
        <end status="unknown"/>
    </location>
</feature>
<feature type="chain" id="PRO_0000021684" description="Maltose excess protein 1, chloroplastic">
    <location>
        <begin status="unknown"/>
        <end position="415"/>
    </location>
</feature>
<feature type="transmembrane region" description="Helical; Name=1" evidence="1">
    <location>
        <begin position="139"/>
        <end position="159"/>
    </location>
</feature>
<feature type="transmembrane region" description="Helical; Name=2" evidence="1">
    <location>
        <begin position="176"/>
        <end position="196"/>
    </location>
</feature>
<feature type="transmembrane region" description="Helical; Name=3" evidence="1">
    <location>
        <begin position="199"/>
        <end position="219"/>
    </location>
</feature>
<feature type="transmembrane region" description="Helical; Name=4" evidence="1">
    <location>
        <begin position="231"/>
        <end position="251"/>
    </location>
</feature>
<feature type="transmembrane region" description="Helical; Name=5" evidence="1">
    <location>
        <begin position="252"/>
        <end position="272"/>
    </location>
</feature>
<feature type="transmembrane region" description="Helical; Name=6" evidence="1">
    <location>
        <begin position="286"/>
        <end position="306"/>
    </location>
</feature>
<feature type="transmembrane region" description="Helical; Name=7" evidence="1">
    <location>
        <begin position="322"/>
        <end position="342"/>
    </location>
</feature>
<feature type="transmembrane region" description="Helical; Name=8" evidence="1">
    <location>
        <begin position="345"/>
        <end position="365"/>
    </location>
</feature>
<feature type="transmembrane region" description="Helical; Name=9" evidence="1">
    <location>
        <begin position="373"/>
        <end position="393"/>
    </location>
</feature>
<feature type="region of interest" description="Disordered" evidence="2">
    <location>
        <begin position="74"/>
        <end position="93"/>
    </location>
</feature>
<feature type="sequence conflict" description="In Ref. 1; AAF04351 and 5; AAM60870." evidence="5" ref="1 5">
    <original>G</original>
    <variation>A</variation>
    <location>
        <position position="3"/>
    </location>
</feature>
<sequence>MEGKAIATSLGGDRVLIFPCSPRSSFVFTSRLSSLPLKRASIGGAVSCSGVNGLTRWNSIVSTRRLVPVRSINSESDSDSDFPHENQQGNPGLGKFKEYQEWDSWTAKFSGGANIPFLMLQLPQIILNTQNLLAGNNTALSAVPWLGMLTGLLGNLSLLSYFAKKREKEAAVVQTLGVVSTHIVLAQLTMAEAMPIQYFVATSAVVTIGLIVNCLYYFGKLSKTVWQLWEDVITIGGLSVLPQIMWSTFVPLVPNSILPGTTAFGIAVAAIIMARTGKLSEKGVRFVGSLSGWTATLMFMWMPVSQMWTNFLNPDNIKGLSSITMLLSMMGNGLMIPRALFIRDLMWLTGSLWATLFYGYGNILCLYLVNCTSQSFFVAATIGLISWIGLALWRDAVAYGHNSPFRSLKELVFGP</sequence>